<organism>
    <name type="scientific">Shewanella putrefaciens (strain CN-32 / ATCC BAA-453)</name>
    <dbReference type="NCBI Taxonomy" id="319224"/>
    <lineage>
        <taxon>Bacteria</taxon>
        <taxon>Pseudomonadati</taxon>
        <taxon>Pseudomonadota</taxon>
        <taxon>Gammaproteobacteria</taxon>
        <taxon>Alteromonadales</taxon>
        <taxon>Shewanellaceae</taxon>
        <taxon>Shewanella</taxon>
    </lineage>
</organism>
<keyword id="KW-0067">ATP-binding</keyword>
<keyword id="KW-0414">Isoprene biosynthesis</keyword>
<keyword id="KW-0418">Kinase</keyword>
<keyword id="KW-0547">Nucleotide-binding</keyword>
<keyword id="KW-0808">Transferase</keyword>
<evidence type="ECO:0000255" key="1">
    <source>
        <dbReference type="HAMAP-Rule" id="MF_00061"/>
    </source>
</evidence>
<comment type="function">
    <text evidence="1">Catalyzes the phosphorylation of the position 2 hydroxy group of 4-diphosphocytidyl-2C-methyl-D-erythritol.</text>
</comment>
<comment type="catalytic activity">
    <reaction evidence="1">
        <text>4-CDP-2-C-methyl-D-erythritol + ATP = 4-CDP-2-C-methyl-D-erythritol 2-phosphate + ADP + H(+)</text>
        <dbReference type="Rhea" id="RHEA:18437"/>
        <dbReference type="ChEBI" id="CHEBI:15378"/>
        <dbReference type="ChEBI" id="CHEBI:30616"/>
        <dbReference type="ChEBI" id="CHEBI:57823"/>
        <dbReference type="ChEBI" id="CHEBI:57919"/>
        <dbReference type="ChEBI" id="CHEBI:456216"/>
        <dbReference type="EC" id="2.7.1.148"/>
    </reaction>
</comment>
<comment type="pathway">
    <text evidence="1">Isoprenoid biosynthesis; isopentenyl diphosphate biosynthesis via DXP pathway; isopentenyl diphosphate from 1-deoxy-D-xylulose 5-phosphate: step 3/6.</text>
</comment>
<comment type="similarity">
    <text evidence="1">Belongs to the GHMP kinase family. IspE subfamily.</text>
</comment>
<dbReference type="EC" id="2.7.1.148" evidence="1"/>
<dbReference type="EMBL" id="CP000681">
    <property type="protein sequence ID" value="ABP74528.1"/>
    <property type="molecule type" value="Genomic_DNA"/>
</dbReference>
<dbReference type="SMR" id="A4Y3J5"/>
<dbReference type="STRING" id="319224.Sputcn32_0798"/>
<dbReference type="KEGG" id="spc:Sputcn32_0798"/>
<dbReference type="eggNOG" id="COG1947">
    <property type="taxonomic scope" value="Bacteria"/>
</dbReference>
<dbReference type="HOGENOM" id="CLU_053057_3_0_6"/>
<dbReference type="UniPathway" id="UPA00056">
    <property type="reaction ID" value="UER00094"/>
</dbReference>
<dbReference type="GO" id="GO:0050515">
    <property type="term" value="F:4-(cytidine 5'-diphospho)-2-C-methyl-D-erythritol kinase activity"/>
    <property type="evidence" value="ECO:0007669"/>
    <property type="project" value="UniProtKB-UniRule"/>
</dbReference>
<dbReference type="GO" id="GO:0005524">
    <property type="term" value="F:ATP binding"/>
    <property type="evidence" value="ECO:0007669"/>
    <property type="project" value="UniProtKB-UniRule"/>
</dbReference>
<dbReference type="GO" id="GO:0019288">
    <property type="term" value="P:isopentenyl diphosphate biosynthetic process, methylerythritol 4-phosphate pathway"/>
    <property type="evidence" value="ECO:0007669"/>
    <property type="project" value="UniProtKB-UniRule"/>
</dbReference>
<dbReference type="GO" id="GO:0016114">
    <property type="term" value="P:terpenoid biosynthetic process"/>
    <property type="evidence" value="ECO:0007669"/>
    <property type="project" value="InterPro"/>
</dbReference>
<dbReference type="FunFam" id="3.30.230.10:FF:000022">
    <property type="entry name" value="4-diphosphocytidyl-2-C-methyl-D-erythritol kinase"/>
    <property type="match status" value="1"/>
</dbReference>
<dbReference type="Gene3D" id="3.30.230.10">
    <property type="match status" value="1"/>
</dbReference>
<dbReference type="Gene3D" id="3.30.70.890">
    <property type="entry name" value="GHMP kinase, C-terminal domain"/>
    <property type="match status" value="1"/>
</dbReference>
<dbReference type="HAMAP" id="MF_00061">
    <property type="entry name" value="IspE"/>
    <property type="match status" value="1"/>
</dbReference>
<dbReference type="InterPro" id="IPR013750">
    <property type="entry name" value="GHMP_kinase_C_dom"/>
</dbReference>
<dbReference type="InterPro" id="IPR036554">
    <property type="entry name" value="GHMP_kinase_C_sf"/>
</dbReference>
<dbReference type="InterPro" id="IPR006204">
    <property type="entry name" value="GHMP_kinase_N_dom"/>
</dbReference>
<dbReference type="InterPro" id="IPR004424">
    <property type="entry name" value="IspE"/>
</dbReference>
<dbReference type="InterPro" id="IPR020568">
    <property type="entry name" value="Ribosomal_Su5_D2-typ_SF"/>
</dbReference>
<dbReference type="InterPro" id="IPR014721">
    <property type="entry name" value="Ribsml_uS5_D2-typ_fold_subgr"/>
</dbReference>
<dbReference type="NCBIfam" id="TIGR00154">
    <property type="entry name" value="ispE"/>
    <property type="match status" value="1"/>
</dbReference>
<dbReference type="PANTHER" id="PTHR43527">
    <property type="entry name" value="4-DIPHOSPHOCYTIDYL-2-C-METHYL-D-ERYTHRITOL KINASE, CHLOROPLASTIC"/>
    <property type="match status" value="1"/>
</dbReference>
<dbReference type="PANTHER" id="PTHR43527:SF2">
    <property type="entry name" value="4-DIPHOSPHOCYTIDYL-2-C-METHYL-D-ERYTHRITOL KINASE, CHLOROPLASTIC"/>
    <property type="match status" value="1"/>
</dbReference>
<dbReference type="Pfam" id="PF08544">
    <property type="entry name" value="GHMP_kinases_C"/>
    <property type="match status" value="1"/>
</dbReference>
<dbReference type="Pfam" id="PF00288">
    <property type="entry name" value="GHMP_kinases_N"/>
    <property type="match status" value="1"/>
</dbReference>
<dbReference type="PIRSF" id="PIRSF010376">
    <property type="entry name" value="IspE"/>
    <property type="match status" value="1"/>
</dbReference>
<dbReference type="SUPFAM" id="SSF55060">
    <property type="entry name" value="GHMP Kinase, C-terminal domain"/>
    <property type="match status" value="1"/>
</dbReference>
<dbReference type="SUPFAM" id="SSF54211">
    <property type="entry name" value="Ribosomal protein S5 domain 2-like"/>
    <property type="match status" value="1"/>
</dbReference>
<gene>
    <name evidence="1" type="primary">ispE</name>
    <name type="ordered locus">Sputcn32_0798</name>
</gene>
<protein>
    <recommendedName>
        <fullName evidence="1">4-diphosphocytidyl-2-C-methyl-D-erythritol kinase</fullName>
        <shortName evidence="1">CMK</shortName>
        <ecNumber evidence="1">2.7.1.148</ecNumber>
    </recommendedName>
    <alternativeName>
        <fullName evidence="1">4-(cytidine-5'-diphospho)-2-C-methyl-D-erythritol kinase</fullName>
    </alternativeName>
</protein>
<name>ISPE_SHEPC</name>
<proteinExistence type="inferred from homology"/>
<feature type="chain" id="PRO_1000007890" description="4-diphosphocytidyl-2-C-methyl-D-erythritol kinase">
    <location>
        <begin position="1"/>
        <end position="284"/>
    </location>
</feature>
<feature type="active site" evidence="1">
    <location>
        <position position="14"/>
    </location>
</feature>
<feature type="active site" evidence="1">
    <location>
        <position position="140"/>
    </location>
</feature>
<feature type="binding site" evidence="1">
    <location>
        <begin position="98"/>
        <end position="108"/>
    </location>
    <ligand>
        <name>ATP</name>
        <dbReference type="ChEBI" id="CHEBI:30616"/>
    </ligand>
</feature>
<sequence>MSAAISRNWPAPAKLNLFLHINGRRTDGYHELQTLFQFIDYCDMLDFKVTDSSELILHSNMAGVVADSDNLILRAAKSLQQMTSFKGGAEIWLDKRLPMGGGLGGGSSDAATTLVALNTLWNTQLSTAELAKIGLKLGADIPVFIHGFAAFAEGIGERLQVVSPPEPWYLVIAPDAHVSTAEVFQDPLLPRNTPKLAIDTLMSQAWINDCQKLVVSKYPQVAKALGWLLEYAPSRMTGTGACVFGEFTQQQQALAALAKLPSDMQGFVAKGMNISPLITRLNHP</sequence>
<reference key="1">
    <citation type="submission" date="2007-04" db="EMBL/GenBank/DDBJ databases">
        <title>Complete sequence of Shewanella putrefaciens CN-32.</title>
        <authorList>
            <consortium name="US DOE Joint Genome Institute"/>
            <person name="Copeland A."/>
            <person name="Lucas S."/>
            <person name="Lapidus A."/>
            <person name="Barry K."/>
            <person name="Detter J.C."/>
            <person name="Glavina del Rio T."/>
            <person name="Hammon N."/>
            <person name="Israni S."/>
            <person name="Dalin E."/>
            <person name="Tice H."/>
            <person name="Pitluck S."/>
            <person name="Chain P."/>
            <person name="Malfatti S."/>
            <person name="Shin M."/>
            <person name="Vergez L."/>
            <person name="Schmutz J."/>
            <person name="Larimer F."/>
            <person name="Land M."/>
            <person name="Hauser L."/>
            <person name="Kyrpides N."/>
            <person name="Mikhailova N."/>
            <person name="Romine M.F."/>
            <person name="Fredrickson J."/>
            <person name="Tiedje J."/>
            <person name="Richardson P."/>
        </authorList>
    </citation>
    <scope>NUCLEOTIDE SEQUENCE [LARGE SCALE GENOMIC DNA]</scope>
    <source>
        <strain>CN-32 / ATCC BAA-453</strain>
    </source>
</reference>
<accession>A4Y3J5</accession>